<sequence>MIGHLRGIIVEKQPPYLLLEVAGVGYEITAPLSTFYHLPEPQEEILLYTHLIVREDAHTLYGFHNDHERRLFRALIKVNGVGPKLALAILSGIGPDEFVHCVLNQNIDQLVRIPGVGRKTAERLVIETKDGLSRWHTNDTPSPEGLRSSNTQPTQDAISALMALGYKPQEAKRAIDAIQKPDLSAETLIRLALKQMVLGT</sequence>
<gene>
    <name evidence="1" type="primary">ruvA</name>
    <name type="ordered locus">CBU_1568</name>
</gene>
<protein>
    <recommendedName>
        <fullName evidence="1">Holliday junction branch migration complex subunit RuvA</fullName>
    </recommendedName>
</protein>
<name>RUVA_COXBU</name>
<accession>Q83BE2</accession>
<feature type="chain" id="PRO_0000094627" description="Holliday junction branch migration complex subunit RuvA">
    <location>
        <begin position="1"/>
        <end position="200"/>
    </location>
</feature>
<feature type="region of interest" description="Domain I" evidence="1">
    <location>
        <begin position="1"/>
        <end position="64"/>
    </location>
</feature>
<feature type="region of interest" description="Domain II" evidence="1">
    <location>
        <begin position="65"/>
        <end position="143"/>
    </location>
</feature>
<feature type="region of interest" description="Disordered" evidence="2">
    <location>
        <begin position="133"/>
        <end position="152"/>
    </location>
</feature>
<feature type="region of interest" description="Flexible linker" evidence="1">
    <location>
        <begin position="144"/>
        <end position="148"/>
    </location>
</feature>
<feature type="region of interest" description="Domain III" evidence="1">
    <location>
        <begin position="149"/>
        <end position="200"/>
    </location>
</feature>
<proteinExistence type="inferred from homology"/>
<comment type="function">
    <text evidence="1">The RuvA-RuvB-RuvC complex processes Holliday junction (HJ) DNA during genetic recombination and DNA repair, while the RuvA-RuvB complex plays an important role in the rescue of blocked DNA replication forks via replication fork reversal (RFR). RuvA specifically binds to HJ cruciform DNA, conferring on it an open structure. The RuvB hexamer acts as an ATP-dependent pump, pulling dsDNA into and through the RuvAB complex. HJ branch migration allows RuvC to scan DNA until it finds its consensus sequence, where it cleaves and resolves the cruciform DNA.</text>
</comment>
<comment type="subunit">
    <text evidence="1">Homotetramer. Forms an RuvA(8)-RuvB(12)-Holliday junction (HJ) complex. HJ DNA is sandwiched between 2 RuvA tetramers; dsDNA enters through RuvA and exits via RuvB. An RuvB hexamer assembles on each DNA strand where it exits the tetramer. Each RuvB hexamer is contacted by two RuvA subunits (via domain III) on 2 adjacent RuvB subunits; this complex drives branch migration. In the full resolvosome a probable DNA-RuvA(4)-RuvB(12)-RuvC(2) complex forms which resolves the HJ.</text>
</comment>
<comment type="subcellular location">
    <subcellularLocation>
        <location evidence="1">Cytoplasm</location>
    </subcellularLocation>
</comment>
<comment type="domain">
    <text evidence="1">Has three domains with a flexible linker between the domains II and III and assumes an 'L' shape. Domain III is highly mobile and contacts RuvB.</text>
</comment>
<comment type="similarity">
    <text evidence="1">Belongs to the RuvA family.</text>
</comment>
<keyword id="KW-0963">Cytoplasm</keyword>
<keyword id="KW-0227">DNA damage</keyword>
<keyword id="KW-0233">DNA recombination</keyword>
<keyword id="KW-0234">DNA repair</keyword>
<keyword id="KW-0238">DNA-binding</keyword>
<keyword id="KW-1185">Reference proteome</keyword>
<reference key="1">
    <citation type="journal article" date="2003" name="Proc. Natl. Acad. Sci. U.S.A.">
        <title>Complete genome sequence of the Q-fever pathogen, Coxiella burnetii.</title>
        <authorList>
            <person name="Seshadri R."/>
            <person name="Paulsen I.T."/>
            <person name="Eisen J.A."/>
            <person name="Read T.D."/>
            <person name="Nelson K.E."/>
            <person name="Nelson W.C."/>
            <person name="Ward N.L."/>
            <person name="Tettelin H."/>
            <person name="Davidsen T.M."/>
            <person name="Beanan M.J."/>
            <person name="DeBoy R.T."/>
            <person name="Daugherty S.C."/>
            <person name="Brinkac L.M."/>
            <person name="Madupu R."/>
            <person name="Dodson R.J."/>
            <person name="Khouri H.M."/>
            <person name="Lee K.H."/>
            <person name="Carty H.A."/>
            <person name="Scanlan D."/>
            <person name="Heinzen R.A."/>
            <person name="Thompson H.A."/>
            <person name="Samuel J.E."/>
            <person name="Fraser C.M."/>
            <person name="Heidelberg J.F."/>
        </authorList>
    </citation>
    <scope>NUCLEOTIDE SEQUENCE [LARGE SCALE GENOMIC DNA]</scope>
    <source>
        <strain>RSA 493 / Nine Mile phase I</strain>
    </source>
</reference>
<organism>
    <name type="scientific">Coxiella burnetii (strain RSA 493 / Nine Mile phase I)</name>
    <dbReference type="NCBI Taxonomy" id="227377"/>
    <lineage>
        <taxon>Bacteria</taxon>
        <taxon>Pseudomonadati</taxon>
        <taxon>Pseudomonadota</taxon>
        <taxon>Gammaproteobacteria</taxon>
        <taxon>Legionellales</taxon>
        <taxon>Coxiellaceae</taxon>
        <taxon>Coxiella</taxon>
    </lineage>
</organism>
<evidence type="ECO:0000255" key="1">
    <source>
        <dbReference type="HAMAP-Rule" id="MF_00031"/>
    </source>
</evidence>
<evidence type="ECO:0000256" key="2">
    <source>
        <dbReference type="SAM" id="MobiDB-lite"/>
    </source>
</evidence>
<dbReference type="EMBL" id="AE016828">
    <property type="protein sequence ID" value="AAO91065.1"/>
    <property type="molecule type" value="Genomic_DNA"/>
</dbReference>
<dbReference type="RefSeq" id="NP_820551.1">
    <property type="nucleotide sequence ID" value="NC_002971.4"/>
</dbReference>
<dbReference type="RefSeq" id="WP_005772102.1">
    <property type="nucleotide sequence ID" value="NZ_CDBG01000001.1"/>
</dbReference>
<dbReference type="SMR" id="Q83BE2"/>
<dbReference type="STRING" id="227377.CBU_1568"/>
<dbReference type="DNASU" id="1209478"/>
<dbReference type="EnsemblBacteria" id="AAO91065">
    <property type="protein sequence ID" value="AAO91065"/>
    <property type="gene ID" value="CBU_1568"/>
</dbReference>
<dbReference type="GeneID" id="1209478"/>
<dbReference type="KEGG" id="cbu:CBU_1568"/>
<dbReference type="PATRIC" id="fig|227377.7.peg.1569"/>
<dbReference type="eggNOG" id="COG0632">
    <property type="taxonomic scope" value="Bacteria"/>
</dbReference>
<dbReference type="HOGENOM" id="CLU_087936_0_0_6"/>
<dbReference type="OrthoDB" id="5293449at2"/>
<dbReference type="Proteomes" id="UP000002671">
    <property type="component" value="Chromosome"/>
</dbReference>
<dbReference type="GO" id="GO:0005737">
    <property type="term" value="C:cytoplasm"/>
    <property type="evidence" value="ECO:0007669"/>
    <property type="project" value="UniProtKB-SubCell"/>
</dbReference>
<dbReference type="GO" id="GO:0009379">
    <property type="term" value="C:Holliday junction helicase complex"/>
    <property type="evidence" value="ECO:0007669"/>
    <property type="project" value="InterPro"/>
</dbReference>
<dbReference type="GO" id="GO:0048476">
    <property type="term" value="C:Holliday junction resolvase complex"/>
    <property type="evidence" value="ECO:0007669"/>
    <property type="project" value="UniProtKB-UniRule"/>
</dbReference>
<dbReference type="GO" id="GO:0005524">
    <property type="term" value="F:ATP binding"/>
    <property type="evidence" value="ECO:0007669"/>
    <property type="project" value="InterPro"/>
</dbReference>
<dbReference type="GO" id="GO:0000400">
    <property type="term" value="F:four-way junction DNA binding"/>
    <property type="evidence" value="ECO:0007669"/>
    <property type="project" value="UniProtKB-UniRule"/>
</dbReference>
<dbReference type="GO" id="GO:0009378">
    <property type="term" value="F:four-way junction helicase activity"/>
    <property type="evidence" value="ECO:0000318"/>
    <property type="project" value="GO_Central"/>
</dbReference>
<dbReference type="GO" id="GO:0006310">
    <property type="term" value="P:DNA recombination"/>
    <property type="evidence" value="ECO:0007669"/>
    <property type="project" value="UniProtKB-UniRule"/>
</dbReference>
<dbReference type="GO" id="GO:0006281">
    <property type="term" value="P:DNA repair"/>
    <property type="evidence" value="ECO:0007669"/>
    <property type="project" value="UniProtKB-UniRule"/>
</dbReference>
<dbReference type="GO" id="GO:0009432">
    <property type="term" value="P:SOS response"/>
    <property type="evidence" value="ECO:0000318"/>
    <property type="project" value="GO_Central"/>
</dbReference>
<dbReference type="CDD" id="cd14332">
    <property type="entry name" value="UBA_RuvA_C"/>
    <property type="match status" value="1"/>
</dbReference>
<dbReference type="Gene3D" id="1.10.150.20">
    <property type="entry name" value="5' to 3' exonuclease, C-terminal subdomain"/>
    <property type="match status" value="1"/>
</dbReference>
<dbReference type="Gene3D" id="1.10.8.10">
    <property type="entry name" value="DNA helicase RuvA subunit, C-terminal domain"/>
    <property type="match status" value="1"/>
</dbReference>
<dbReference type="Gene3D" id="2.40.50.140">
    <property type="entry name" value="Nucleic acid-binding proteins"/>
    <property type="match status" value="1"/>
</dbReference>
<dbReference type="HAMAP" id="MF_00031">
    <property type="entry name" value="DNA_HJ_migration_RuvA"/>
    <property type="match status" value="1"/>
</dbReference>
<dbReference type="InterPro" id="IPR013849">
    <property type="entry name" value="DNA_helicase_Holl-junc_RuvA_I"/>
</dbReference>
<dbReference type="InterPro" id="IPR003583">
    <property type="entry name" value="Hlx-hairpin-Hlx_DNA-bd_motif"/>
</dbReference>
<dbReference type="InterPro" id="IPR012340">
    <property type="entry name" value="NA-bd_OB-fold"/>
</dbReference>
<dbReference type="InterPro" id="IPR000085">
    <property type="entry name" value="RuvA"/>
</dbReference>
<dbReference type="InterPro" id="IPR010994">
    <property type="entry name" value="RuvA_2-like"/>
</dbReference>
<dbReference type="InterPro" id="IPR011114">
    <property type="entry name" value="RuvA_C"/>
</dbReference>
<dbReference type="InterPro" id="IPR036267">
    <property type="entry name" value="RuvA_C_sf"/>
</dbReference>
<dbReference type="NCBIfam" id="TIGR00084">
    <property type="entry name" value="ruvA"/>
    <property type="match status" value="1"/>
</dbReference>
<dbReference type="Pfam" id="PF14520">
    <property type="entry name" value="HHH_5"/>
    <property type="match status" value="1"/>
</dbReference>
<dbReference type="Pfam" id="PF07499">
    <property type="entry name" value="RuvA_C"/>
    <property type="match status" value="1"/>
</dbReference>
<dbReference type="Pfam" id="PF01330">
    <property type="entry name" value="RuvA_N"/>
    <property type="match status" value="1"/>
</dbReference>
<dbReference type="SMART" id="SM00278">
    <property type="entry name" value="HhH1"/>
    <property type="match status" value="2"/>
</dbReference>
<dbReference type="SUPFAM" id="SSF46929">
    <property type="entry name" value="DNA helicase RuvA subunit, C-terminal domain"/>
    <property type="match status" value="1"/>
</dbReference>
<dbReference type="SUPFAM" id="SSF50249">
    <property type="entry name" value="Nucleic acid-binding proteins"/>
    <property type="match status" value="1"/>
</dbReference>
<dbReference type="SUPFAM" id="SSF47781">
    <property type="entry name" value="RuvA domain 2-like"/>
    <property type="match status" value="1"/>
</dbReference>